<gene>
    <name type="primary">mdoD</name>
    <name type="synonym">opgD</name>
    <name type="ordered locus">Z2294</name>
    <name type="ordered locus">ECs2029</name>
</gene>
<keyword id="KW-0574">Periplasm</keyword>
<keyword id="KW-1185">Reference proteome</keyword>
<keyword id="KW-0732">Signal</keyword>
<accession>Q8X9V1</accession>
<dbReference type="EMBL" id="AE005174">
    <property type="protein sequence ID" value="AAG56350.1"/>
    <property type="molecule type" value="Genomic_DNA"/>
</dbReference>
<dbReference type="EMBL" id="BA000007">
    <property type="protein sequence ID" value="BAB35452.2"/>
    <property type="status" value="ALT_INIT"/>
    <property type="molecule type" value="Genomic_DNA"/>
</dbReference>
<dbReference type="PIR" id="B85736">
    <property type="entry name" value="B85736"/>
</dbReference>
<dbReference type="PIR" id="E90882">
    <property type="entry name" value="E90882"/>
</dbReference>
<dbReference type="RefSeq" id="NP_310056.1">
    <property type="nucleotide sequence ID" value="NC_002695.1"/>
</dbReference>
<dbReference type="RefSeq" id="WP_000375956.1">
    <property type="nucleotide sequence ID" value="NZ_SEKU01000010.1"/>
</dbReference>
<dbReference type="SMR" id="Q8X9V1"/>
<dbReference type="STRING" id="155864.Z2294"/>
<dbReference type="GeneID" id="917232"/>
<dbReference type="GeneID" id="93775566"/>
<dbReference type="KEGG" id="ece:Z2294"/>
<dbReference type="KEGG" id="ecs:ECs_2029"/>
<dbReference type="PATRIC" id="fig|386585.9.peg.2129"/>
<dbReference type="eggNOG" id="COG3131">
    <property type="taxonomic scope" value="Bacteria"/>
</dbReference>
<dbReference type="HOGENOM" id="CLU_023403_2_0_6"/>
<dbReference type="OMA" id="DVQFFHV"/>
<dbReference type="UniPathway" id="UPA00637"/>
<dbReference type="Proteomes" id="UP000000558">
    <property type="component" value="Chromosome"/>
</dbReference>
<dbReference type="Proteomes" id="UP000002519">
    <property type="component" value="Chromosome"/>
</dbReference>
<dbReference type="GO" id="GO:0030288">
    <property type="term" value="C:outer membrane-bounded periplasmic space"/>
    <property type="evidence" value="ECO:0007669"/>
    <property type="project" value="TreeGrafter"/>
</dbReference>
<dbReference type="GO" id="GO:0030246">
    <property type="term" value="F:carbohydrate binding"/>
    <property type="evidence" value="ECO:0007669"/>
    <property type="project" value="InterPro"/>
</dbReference>
<dbReference type="GO" id="GO:0003824">
    <property type="term" value="F:catalytic activity"/>
    <property type="evidence" value="ECO:0007669"/>
    <property type="project" value="InterPro"/>
</dbReference>
<dbReference type="GO" id="GO:0051274">
    <property type="term" value="P:beta-glucan biosynthetic process"/>
    <property type="evidence" value="ECO:0007669"/>
    <property type="project" value="TreeGrafter"/>
</dbReference>
<dbReference type="FunFam" id="2.60.40.10:FF:000379">
    <property type="entry name" value="Glucans biosynthesis protein D"/>
    <property type="match status" value="1"/>
</dbReference>
<dbReference type="FunFam" id="2.70.98.10:FF:000004">
    <property type="entry name" value="Glucans biosynthesis protein D"/>
    <property type="match status" value="1"/>
</dbReference>
<dbReference type="Gene3D" id="2.70.98.10">
    <property type="match status" value="1"/>
</dbReference>
<dbReference type="Gene3D" id="2.60.40.10">
    <property type="entry name" value="Immunoglobulins"/>
    <property type="match status" value="1"/>
</dbReference>
<dbReference type="HAMAP" id="MF_01068">
    <property type="entry name" value="MdoD_OpgD"/>
    <property type="match status" value="1"/>
</dbReference>
<dbReference type="InterPro" id="IPR011013">
    <property type="entry name" value="Gal_mutarotase_sf_dom"/>
</dbReference>
<dbReference type="InterPro" id="IPR014718">
    <property type="entry name" value="GH-type_carb-bd"/>
</dbReference>
<dbReference type="InterPro" id="IPR023724">
    <property type="entry name" value="Glucan_biosyn_MdoD"/>
</dbReference>
<dbReference type="InterPro" id="IPR014438">
    <property type="entry name" value="Glucan_biosyn_MdoG/MdoD"/>
</dbReference>
<dbReference type="InterPro" id="IPR007444">
    <property type="entry name" value="Glucan_biosyn_MdoG_C"/>
</dbReference>
<dbReference type="InterPro" id="IPR013783">
    <property type="entry name" value="Ig-like_fold"/>
</dbReference>
<dbReference type="InterPro" id="IPR014756">
    <property type="entry name" value="Ig_E-set"/>
</dbReference>
<dbReference type="InterPro" id="IPR006311">
    <property type="entry name" value="TAT_signal"/>
</dbReference>
<dbReference type="InterPro" id="IPR019546">
    <property type="entry name" value="TAT_signal_bac_arc"/>
</dbReference>
<dbReference type="NCBIfam" id="TIGR01409">
    <property type="entry name" value="TAT_signal_seq"/>
    <property type="match status" value="1"/>
</dbReference>
<dbReference type="PANTHER" id="PTHR30504">
    <property type="entry name" value="GLUCANS BIOSYNTHESIS PROTEIN"/>
    <property type="match status" value="1"/>
</dbReference>
<dbReference type="PANTHER" id="PTHR30504:SF3">
    <property type="entry name" value="GLUCANS BIOSYNTHESIS PROTEIN D"/>
    <property type="match status" value="1"/>
</dbReference>
<dbReference type="Pfam" id="PF04349">
    <property type="entry name" value="MdoG"/>
    <property type="match status" value="1"/>
</dbReference>
<dbReference type="PIRSF" id="PIRSF006281">
    <property type="entry name" value="MdoG"/>
    <property type="match status" value="1"/>
</dbReference>
<dbReference type="SUPFAM" id="SSF81296">
    <property type="entry name" value="E set domains"/>
    <property type="match status" value="1"/>
</dbReference>
<dbReference type="SUPFAM" id="SSF74650">
    <property type="entry name" value="Galactose mutarotase-like"/>
    <property type="match status" value="1"/>
</dbReference>
<dbReference type="PROSITE" id="PS51318">
    <property type="entry name" value="TAT"/>
    <property type="match status" value="1"/>
</dbReference>
<organism>
    <name type="scientific">Escherichia coli O157:H7</name>
    <dbReference type="NCBI Taxonomy" id="83334"/>
    <lineage>
        <taxon>Bacteria</taxon>
        <taxon>Pseudomonadati</taxon>
        <taxon>Pseudomonadota</taxon>
        <taxon>Gammaproteobacteria</taxon>
        <taxon>Enterobacterales</taxon>
        <taxon>Enterobacteriaceae</taxon>
        <taxon>Escherichia</taxon>
    </lineage>
</organism>
<proteinExistence type="inferred from homology"/>
<evidence type="ECO:0000250" key="1"/>
<evidence type="ECO:0000255" key="2"/>
<evidence type="ECO:0000305" key="3"/>
<reference key="1">
    <citation type="journal article" date="2001" name="Nature">
        <title>Genome sequence of enterohaemorrhagic Escherichia coli O157:H7.</title>
        <authorList>
            <person name="Perna N.T."/>
            <person name="Plunkett G. III"/>
            <person name="Burland V."/>
            <person name="Mau B."/>
            <person name="Glasner J.D."/>
            <person name="Rose D.J."/>
            <person name="Mayhew G.F."/>
            <person name="Evans P.S."/>
            <person name="Gregor J."/>
            <person name="Kirkpatrick H.A."/>
            <person name="Posfai G."/>
            <person name="Hackett J."/>
            <person name="Klink S."/>
            <person name="Boutin A."/>
            <person name="Shao Y."/>
            <person name="Miller L."/>
            <person name="Grotbeck E.J."/>
            <person name="Davis N.W."/>
            <person name="Lim A."/>
            <person name="Dimalanta E.T."/>
            <person name="Potamousis K."/>
            <person name="Apodaca J."/>
            <person name="Anantharaman T.S."/>
            <person name="Lin J."/>
            <person name="Yen G."/>
            <person name="Schwartz D.C."/>
            <person name="Welch R.A."/>
            <person name="Blattner F.R."/>
        </authorList>
    </citation>
    <scope>NUCLEOTIDE SEQUENCE [LARGE SCALE GENOMIC DNA]</scope>
    <source>
        <strain>O157:H7 / EDL933 / ATCC 700927 / EHEC</strain>
    </source>
</reference>
<reference key="2">
    <citation type="journal article" date="2001" name="DNA Res.">
        <title>Complete genome sequence of enterohemorrhagic Escherichia coli O157:H7 and genomic comparison with a laboratory strain K-12.</title>
        <authorList>
            <person name="Hayashi T."/>
            <person name="Makino K."/>
            <person name="Ohnishi M."/>
            <person name="Kurokawa K."/>
            <person name="Ishii K."/>
            <person name="Yokoyama K."/>
            <person name="Han C.-G."/>
            <person name="Ohtsubo E."/>
            <person name="Nakayama K."/>
            <person name="Murata T."/>
            <person name="Tanaka M."/>
            <person name="Tobe T."/>
            <person name="Iida T."/>
            <person name="Takami H."/>
            <person name="Honda T."/>
            <person name="Sasakawa C."/>
            <person name="Ogasawara N."/>
            <person name="Yasunaga T."/>
            <person name="Kuhara S."/>
            <person name="Shiba T."/>
            <person name="Hattori M."/>
            <person name="Shinagawa H."/>
        </authorList>
    </citation>
    <scope>NUCLEOTIDE SEQUENCE [LARGE SCALE GENOMIC DNA]</scope>
    <source>
        <strain>O157:H7 / Sakai / RIMD 0509952 / EHEC</strain>
    </source>
</reference>
<sequence length="551" mass="62768">MDRRRFIKGSMAMAAVCGTSGIASLFSQAAFAADSDIADGQTQRFDFSILQSMAHDLAQTAWRGAPRPLPDTLATMTPQAYNSIQYDAEKSLWHNVENRQLDAQFFHMGMGFRRRVRMFSVDPATHLAREIHFRPELFKYNDAGVDTKQLEGQSDLGFAGFRVFKAPELARRDVVSFLGASYFRAVDDTYQYGLSARGLAIDTYTDSKEEFPDFTAFWFDTVKPGATTFTVYALLDSASITGAYKFTIHCEKSQVIMDVENHLYARKDIKQLGIAPMTSMFSCGTNERRMCDTIHPQIHDSDRLSMWRGNGEWICRPLNNPQKLQFNAYTDNNPKGFGLLQLDRDFSHYQDIMGWYNKRPSLWVEPRNKWGKGTIGLMEIPTTGETLDNIVCFWQPEKAVKAGDEFAFQYRLYWSAQPPVHCPLARVMATRTGMGGFPEGWAPGEHYPEKWARRFAVDFVGGDLKAAAPKGIEPVITLSSGEAKQIEILYIEPIDGYRIQFDWYPTSDSTDPVDMRMYLRCQGDAISETWLYQYFPPAPDKRQYVDDRVMS</sequence>
<name>OPGD_ECO57</name>
<feature type="signal peptide" description="Tat-type signal" evidence="2">
    <location>
        <begin position="1"/>
        <end position="32"/>
    </location>
</feature>
<feature type="chain" id="PRO_0000020208" description="Glucans biosynthesis protein D">
    <location>
        <begin position="33"/>
        <end position="551"/>
    </location>
</feature>
<comment type="function">
    <text evidence="1">Probably involved in the control of the structural glucose backbone of osmoregulated periplasmic glucans (OPGs).</text>
</comment>
<comment type="pathway">
    <text>Glycan metabolism; osmoregulated periplasmic glucan (OPG) biosynthesis.</text>
</comment>
<comment type="subcellular location">
    <subcellularLocation>
        <location evidence="1">Periplasm</location>
    </subcellularLocation>
</comment>
<comment type="PTM">
    <text>Predicted to be exported by the Tat system. The position of the signal peptide cleavage has not been experimentally proven.</text>
</comment>
<comment type="similarity">
    <text evidence="3">Belongs to the OpgD/OpgG family.</text>
</comment>
<comment type="sequence caution" evidence="3">
    <conflict type="erroneous initiation">
        <sequence resource="EMBL-CDS" id="BAB35452"/>
    </conflict>
    <text>Truncated N-terminus.</text>
</comment>
<protein>
    <recommendedName>
        <fullName>Glucans biosynthesis protein D</fullName>
    </recommendedName>
</protein>